<proteinExistence type="evidence at protein level"/>
<protein>
    <recommendedName>
        <fullName>Auxin-responsive protein IAA27</fullName>
    </recommendedName>
    <alternativeName>
        <fullName>Auxin-induced protein 27</fullName>
    </alternativeName>
    <alternativeName>
        <fullName>Indoleacetic acid-induced protein 27</fullName>
    </alternativeName>
    <alternativeName>
        <fullName>Phytochrome-associated protein 2</fullName>
    </alternativeName>
</protein>
<name>IAA27_ARATH</name>
<evidence type="ECO:0000250" key="1"/>
<evidence type="ECO:0000255" key="2">
    <source>
        <dbReference type="PROSITE-ProRule" id="PRU01081"/>
    </source>
</evidence>
<evidence type="ECO:0000256" key="3">
    <source>
        <dbReference type="SAM" id="MobiDB-lite"/>
    </source>
</evidence>
<evidence type="ECO:0000269" key="4">
    <source>
    </source>
</evidence>
<evidence type="ECO:0000269" key="5">
    <source>
    </source>
</evidence>
<evidence type="ECO:0000305" key="6"/>
<sequence>MSVSVAAEHDYIGLSEFPTMEATTMSDKTKTRDNNNGLNFKATELRLGLPGSESPERVDSRFLALNKSSCPVSGAKRVFSDAINDSNKWVFSPGSTTATGDVGSGSGPRTSVVKDGKSTTFTKPAVPVKEKKSSATAPASKAQVVGWPPIRSFRKNSMASSQSQKPGNNSETEEAEAKSGPEQPCLYVKVSMEGAPYLRKIDLKTYKSYLELSSALEKMFSCFTIGQFGSHGGCGRDGLNESRLTDLLRGSEYVVTYEDKDSDWMLVGDVPWEMFICSCKKLRIMKSSEAIGLAPRVMEKCRSRN</sequence>
<comment type="function">
    <text evidence="4">Aux/IAA proteins are short-lived transcriptional factors that function as repressors of early auxin response genes at low auxin concentrations. Repression is thought to result from the interaction with auxin response factors (ARFs), proteins that bind to the auxin-responsive promoter element (AuxRE). Formation of heterodimers with ARF proteins may alter their ability to modulate early auxin response genes expression.</text>
</comment>
<comment type="subunit">
    <text evidence="1 5">Homodimers and heterodimers (By similarity). Interacts with phytochrome A. Interacts with TPL.</text>
</comment>
<comment type="interaction">
    <interactant intactId="EBI-3946677">
        <id>Q9ZSY8</id>
    </interactant>
    <interactant intactId="EBI-3946783">
        <id>Q9C5W9</id>
        <label>ARF18</label>
    </interactant>
    <organismsDiffer>false</organismsDiffer>
    <experiments>4</experiments>
</comment>
<comment type="interaction">
    <interactant intactId="EBI-3946677">
        <id>Q9ZSY8</id>
    </interactant>
    <interactant intactId="EBI-529887">
        <id>Q8RYC8</id>
        <label>ARF19</label>
    </interactant>
    <organismsDiffer>false</organismsDiffer>
    <experiments>3</experiments>
</comment>
<comment type="interaction">
    <interactant intactId="EBI-3946677">
        <id>Q9ZSY8</id>
    </interactant>
    <interactant intactId="EBI-15199331">
        <id>Q9SJM4</id>
        <label>GPL3</label>
    </interactant>
    <organismsDiffer>false</organismsDiffer>
    <experiments>3</experiments>
</comment>
<comment type="interaction">
    <interactant intactId="EBI-3946677">
        <id>Q9ZSY8</id>
    </interactant>
    <interactant intactId="EBI-630505">
        <id>P49677</id>
        <label>IAA1</label>
    </interactant>
    <organismsDiffer>false</organismsDiffer>
    <experiments>10</experiments>
</comment>
<comment type="interaction">
    <interactant intactId="EBI-3946677">
        <id>Q9ZSY8</id>
    </interactant>
    <interactant intactId="EBI-3946434">
        <id>Q38828</id>
        <label>IAA10</label>
    </interactant>
    <organismsDiffer>false</organismsDiffer>
    <experiments>9</experiments>
</comment>
<comment type="interaction">
    <interactant intactId="EBI-3946677">
        <id>Q9ZSY8</id>
    </interactant>
    <interactant intactId="EBI-2367923">
        <id>Q38829</id>
        <label>IAA11</label>
    </interactant>
    <organismsDiffer>false</organismsDiffer>
    <experiments>7</experiments>
</comment>
<comment type="interaction">
    <interactant intactId="EBI-3946677">
        <id>Q9ZSY8</id>
    </interactant>
    <interactant intactId="EBI-617608">
        <id>Q38830</id>
        <label>IAA12</label>
    </interactant>
    <organismsDiffer>false</organismsDiffer>
    <experiments>3</experiments>
</comment>
<comment type="interaction">
    <interactant intactId="EBI-3946677">
        <id>Q9ZSY8</id>
    </interactant>
    <interactant intactId="EBI-1554143">
        <id>Q38831</id>
        <label>IAA13</label>
    </interactant>
    <organismsDiffer>false</organismsDiffer>
    <experiments>9</experiments>
</comment>
<comment type="interaction">
    <interactant intactId="EBI-3946677">
        <id>Q9ZSY8</id>
    </interactant>
    <interactant intactId="EBI-2295562">
        <id>Q38832</id>
        <label>IAA14</label>
    </interactant>
    <organismsDiffer>false</organismsDiffer>
    <experiments>3</experiments>
</comment>
<comment type="interaction">
    <interactant intactId="EBI-3946677">
        <id>Q9ZSY8</id>
    </interactant>
    <interactant intactId="EBI-25524519">
        <id>A0A2H1ZEF6</id>
        <label>IAA15</label>
    </interactant>
    <organismsDiffer>false</organismsDiffer>
    <experiments>5</experiments>
</comment>
<comment type="interaction">
    <interactant intactId="EBI-3946677">
        <id>Q9ZSY8</id>
    </interactant>
    <interactant intactId="EBI-632231">
        <id>O24407</id>
        <label>IAA16</label>
    </interactant>
    <organismsDiffer>false</organismsDiffer>
    <experiments>9</experiments>
</comment>
<comment type="interaction">
    <interactant intactId="EBI-3946677">
        <id>Q9ZSY8</id>
    </interactant>
    <interactant intactId="EBI-632243">
        <id>P93830</id>
        <label>IAA17</label>
    </interactant>
    <organismsDiffer>false</organismsDiffer>
    <experiments>9</experiments>
</comment>
<comment type="interaction">
    <interactant intactId="EBI-3946677">
        <id>Q9ZSY8</id>
    </interactant>
    <interactant intactId="EBI-2295525">
        <id>O24408</id>
        <label>IAA18</label>
    </interactant>
    <organismsDiffer>false</organismsDiffer>
    <experiments>4</experiments>
</comment>
<comment type="interaction">
    <interactant intactId="EBI-3946677">
        <id>Q9ZSY8</id>
    </interactant>
    <interactant intactId="EBI-632257">
        <id>O24409</id>
        <label>IAA19</label>
    </interactant>
    <organismsDiffer>false</organismsDiffer>
    <experiments>10</experiments>
</comment>
<comment type="interaction">
    <interactant intactId="EBI-3946677">
        <id>Q9ZSY8</id>
    </interactant>
    <interactant intactId="EBI-632343">
        <id>P49678</id>
        <label>IAA2</label>
    </interactant>
    <organismsDiffer>false</organismsDiffer>
    <experiments>9</experiments>
</comment>
<comment type="interaction">
    <interactant intactId="EBI-3946677">
        <id>Q9ZSY8</id>
    </interactant>
    <interactant intactId="EBI-632272">
        <id>O24410</id>
        <label>IAA20</label>
    </interactant>
    <organismsDiffer>false</organismsDiffer>
    <experiments>3</experiments>
</comment>
<comment type="interaction">
    <interactant intactId="EBI-3946677">
        <id>Q9ZSY8</id>
    </interactant>
    <interactant intactId="EBI-3947418">
        <id>Q8LAL2</id>
        <label>IAA26</label>
    </interactant>
    <organismsDiffer>false</organismsDiffer>
    <experiments>8</experiments>
</comment>
<comment type="interaction">
    <interactant intactId="EBI-3946677">
        <id>Q9ZSY8</id>
    </interactant>
    <interactant intactId="EBI-3946677">
        <id>Q9ZSY8</id>
        <label>IAA27</label>
    </interactant>
    <organismsDiffer>false</organismsDiffer>
    <experiments>5</experiments>
</comment>
<comment type="interaction">
    <interactant intactId="EBI-3946677">
        <id>Q9ZSY8</id>
    </interactant>
    <interactant intactId="EBI-3133404">
        <id>Q9XFM0</id>
        <label>IAA28</label>
    </interactant>
    <organismsDiffer>false</organismsDiffer>
    <experiments>8</experiments>
</comment>
<comment type="interaction">
    <interactant intactId="EBI-3946677">
        <id>Q9ZSY8</id>
    </interactant>
    <interactant intactId="EBI-307174">
        <id>Q38822</id>
        <label>IAA3</label>
    </interactant>
    <organismsDiffer>false</organismsDiffer>
    <experiments>9</experiments>
</comment>
<comment type="interaction">
    <interactant intactId="EBI-3946677">
        <id>Q9ZSY8</id>
    </interactant>
    <interactant intactId="EBI-3946408">
        <id>Q8H174</id>
        <label>IAA31</label>
    </interactant>
    <organismsDiffer>false</organismsDiffer>
    <experiments>9</experiments>
</comment>
<comment type="interaction">
    <interactant intactId="EBI-3946677">
        <id>Q9ZSY8</id>
    </interactant>
    <interactant intactId="EBI-3946448">
        <id>Q8RYC6</id>
        <label>IAA32</label>
    </interactant>
    <organismsDiffer>false</organismsDiffer>
    <experiments>3</experiments>
</comment>
<comment type="interaction">
    <interactant intactId="EBI-3946677">
        <id>Q9ZSY8</id>
    </interactant>
    <interactant intactId="EBI-3946739">
        <id>Q9FKM7</id>
        <label>IAA33</label>
    </interactant>
    <organismsDiffer>false</organismsDiffer>
    <experiments>6</experiments>
</comment>
<comment type="interaction">
    <interactant intactId="EBI-3946677">
        <id>Q9ZSY8</id>
    </interactant>
    <interactant intactId="EBI-3946459">
        <id>Q9C5X0</id>
        <label>IAA34</label>
    </interactant>
    <organismsDiffer>false</organismsDiffer>
    <experiments>8</experiments>
</comment>
<comment type="interaction">
    <interactant intactId="EBI-3946677">
        <id>Q9ZSY8</id>
    </interactant>
    <interactant intactId="EBI-632187">
        <id>P33077</id>
        <label>IAA4</label>
    </interactant>
    <organismsDiffer>false</organismsDiffer>
    <experiments>9</experiments>
</comment>
<comment type="interaction">
    <interactant intactId="EBI-3946677">
        <id>Q9ZSY8</id>
    </interactant>
    <interactant intactId="EBI-3946487">
        <id>P33078</id>
        <label>IAA5</label>
    </interactant>
    <organismsDiffer>false</organismsDiffer>
    <experiments>6</experiments>
</comment>
<comment type="interaction">
    <interactant intactId="EBI-3946677">
        <id>Q9ZSY8</id>
    </interactant>
    <interactant intactId="EBI-1554124">
        <id>Q38824</id>
        <label>IAA6</label>
    </interactant>
    <organismsDiffer>false</organismsDiffer>
    <experiments>9</experiments>
</comment>
<comment type="interaction">
    <interactant intactId="EBI-3946677">
        <id>Q9ZSY8</id>
    </interactant>
    <interactant intactId="EBI-632200">
        <id>Q38826</id>
        <label>IAA8</label>
    </interactant>
    <organismsDiffer>false</organismsDiffer>
    <experiments>6</experiments>
</comment>
<comment type="interaction">
    <interactant intactId="EBI-3946677">
        <id>Q9ZSY8</id>
    </interactant>
    <interactant intactId="EBI-632216">
        <id>Q38827</id>
        <label>IAA9</label>
    </interactant>
    <organismsDiffer>false</organismsDiffer>
    <experiments>4</experiments>
</comment>
<comment type="interaction">
    <interactant intactId="EBI-3946677">
        <id>Q9ZSY8</id>
    </interactant>
    <interactant intactId="EBI-15195631">
        <id>Q9LID0</id>
        <label>LDL2</label>
    </interactant>
    <organismsDiffer>false</organismsDiffer>
    <experiments>3</experiments>
</comment>
<comment type="interaction">
    <interactant intactId="EBI-3946677">
        <id>Q9ZSY8</id>
    </interactant>
    <interactant intactId="EBI-4426144">
        <id>Q9C9L2</id>
        <label>TCP15</label>
    </interactant>
    <organismsDiffer>false</organismsDiffer>
    <experiments>3</experiments>
</comment>
<comment type="interaction">
    <interactant intactId="EBI-3946677">
        <id>Q9ZSY8</id>
    </interactant>
    <interactant intactId="EBI-25522447">
        <id>Q9MAH8</id>
        <label>TCP3</label>
    </interactant>
    <organismsDiffer>false</organismsDiffer>
    <experiments>3</experiments>
</comment>
<comment type="subcellular location">
    <subcellularLocation>
        <location evidence="1">Nucleus</location>
    </subcellularLocation>
</comment>
<comment type="induction">
    <text evidence="1">By auxin.</text>
</comment>
<comment type="domain">
    <text>The N-terminal half of the protein contains two conserved domains I and II. Domain I includes a slightly degenerated ERF-associated amphiphilic repression (EAR) motif which seems to be involved in the activity of transcriptional repression. Domain II is required for the correct degradation of the protein through the SCF-mediated ubiquitin-proteasome pathway. Interactions between Aux/IAA proteins and auxin response factors (ARFs) occur through their C-terminal dimerization domains III and IV.</text>
</comment>
<comment type="similarity">
    <text evidence="6">Belongs to the Aux/IAA family.</text>
</comment>
<feature type="chain" id="PRO_0000112853" description="Auxin-responsive protein IAA27">
    <location>
        <begin position="1"/>
        <end position="305"/>
    </location>
</feature>
<feature type="domain" description="PB1" evidence="2">
    <location>
        <begin position="185"/>
        <end position="287"/>
    </location>
</feature>
<feature type="region of interest" description="Disordered" evidence="3">
    <location>
        <begin position="96"/>
        <end position="119"/>
    </location>
</feature>
<feature type="region of interest" description="Disordered" evidence="3">
    <location>
        <begin position="155"/>
        <end position="180"/>
    </location>
</feature>
<feature type="short sequence motif" description="EAR-like (transcriptional repression)">
    <location>
        <begin position="45"/>
        <end position="49"/>
    </location>
</feature>
<feature type="compositionally biased region" description="Polar residues" evidence="3">
    <location>
        <begin position="155"/>
        <end position="170"/>
    </location>
</feature>
<keyword id="KW-0002">3D-structure</keyword>
<keyword id="KW-0927">Auxin signaling pathway</keyword>
<keyword id="KW-0539">Nucleus</keyword>
<keyword id="KW-1185">Reference proteome</keyword>
<keyword id="KW-0678">Repressor</keyword>
<keyword id="KW-0804">Transcription</keyword>
<keyword id="KW-0805">Transcription regulation</keyword>
<dbReference type="EMBL" id="AF087936">
    <property type="protein sequence ID" value="AAC99773.1"/>
    <property type="molecule type" value="mRNA"/>
</dbReference>
<dbReference type="EMBL" id="AJ458326">
    <property type="protein sequence ID" value="CAD30208.1"/>
    <property type="molecule type" value="mRNA"/>
</dbReference>
<dbReference type="EMBL" id="AL078470">
    <property type="protein sequence ID" value="CAB43922.1"/>
    <property type="molecule type" value="Genomic_DNA"/>
</dbReference>
<dbReference type="EMBL" id="AL161574">
    <property type="protein sequence ID" value="CAB79666.1"/>
    <property type="molecule type" value="Genomic_DNA"/>
</dbReference>
<dbReference type="EMBL" id="CP002687">
    <property type="protein sequence ID" value="AEE85584.1"/>
    <property type="molecule type" value="Genomic_DNA"/>
</dbReference>
<dbReference type="EMBL" id="AF332402">
    <property type="protein sequence ID" value="AAG48766.1"/>
    <property type="molecule type" value="mRNA"/>
</dbReference>
<dbReference type="EMBL" id="AY053404">
    <property type="protein sequence ID" value="AAK96634.1"/>
    <property type="molecule type" value="mRNA"/>
</dbReference>
<dbReference type="EMBL" id="AY133516">
    <property type="protein sequence ID" value="AAM91346.1"/>
    <property type="molecule type" value="mRNA"/>
</dbReference>
<dbReference type="PIR" id="T08963">
    <property type="entry name" value="T08963"/>
</dbReference>
<dbReference type="RefSeq" id="NP_194637.1">
    <property type="nucleotide sequence ID" value="NM_119052.4"/>
</dbReference>
<dbReference type="PDB" id="5NQV">
    <property type="method" value="X-ray"/>
    <property type="resolution" value="1.95 A"/>
    <property type="chains" value="E/F/G/H=43-53"/>
</dbReference>
<dbReference type="PDBsum" id="5NQV"/>
<dbReference type="SMR" id="Q9ZSY8"/>
<dbReference type="BioGRID" id="14316">
    <property type="interactions" value="51"/>
</dbReference>
<dbReference type="ELM" id="Q9ZSY8"/>
<dbReference type="FunCoup" id="Q9ZSY8">
    <property type="interactions" value="836"/>
</dbReference>
<dbReference type="IntAct" id="Q9ZSY8">
    <property type="interactions" value="50"/>
</dbReference>
<dbReference type="STRING" id="3702.Q9ZSY8"/>
<dbReference type="PaxDb" id="3702-AT4G29080.1"/>
<dbReference type="ProteomicsDB" id="232191"/>
<dbReference type="EnsemblPlants" id="AT4G29080.1">
    <property type="protein sequence ID" value="AT4G29080.1"/>
    <property type="gene ID" value="AT4G29080"/>
</dbReference>
<dbReference type="GeneID" id="829029"/>
<dbReference type="Gramene" id="AT4G29080.1">
    <property type="protein sequence ID" value="AT4G29080.1"/>
    <property type="gene ID" value="AT4G29080"/>
</dbReference>
<dbReference type="KEGG" id="ath:AT4G29080"/>
<dbReference type="Araport" id="AT4G29080"/>
<dbReference type="TAIR" id="AT4G29080">
    <property type="gene designation" value="PAP2"/>
</dbReference>
<dbReference type="eggNOG" id="ENOG502QTW8">
    <property type="taxonomic scope" value="Eukaryota"/>
</dbReference>
<dbReference type="HOGENOM" id="CLU_049393_1_2_1"/>
<dbReference type="InParanoid" id="Q9ZSY8"/>
<dbReference type="OMA" id="PCLYVKV"/>
<dbReference type="OrthoDB" id="7848332at2759"/>
<dbReference type="PhylomeDB" id="Q9ZSY8"/>
<dbReference type="PRO" id="PR:Q9ZSY8"/>
<dbReference type="Proteomes" id="UP000006548">
    <property type="component" value="Chromosome 4"/>
</dbReference>
<dbReference type="ExpressionAtlas" id="Q9ZSY8">
    <property type="expression patterns" value="baseline and differential"/>
</dbReference>
<dbReference type="GO" id="GO:0005634">
    <property type="term" value="C:nucleus"/>
    <property type="evidence" value="ECO:0007669"/>
    <property type="project" value="UniProtKB-SubCell"/>
</dbReference>
<dbReference type="GO" id="GO:0003700">
    <property type="term" value="F:DNA-binding transcription factor activity"/>
    <property type="evidence" value="ECO:0000250"/>
    <property type="project" value="TAIR"/>
</dbReference>
<dbReference type="GO" id="GO:0042802">
    <property type="term" value="F:identical protein binding"/>
    <property type="evidence" value="ECO:0000353"/>
    <property type="project" value="IntAct"/>
</dbReference>
<dbReference type="GO" id="GO:0000976">
    <property type="term" value="F:transcription cis-regulatory region binding"/>
    <property type="evidence" value="ECO:0000353"/>
    <property type="project" value="TAIR"/>
</dbReference>
<dbReference type="GO" id="GO:0009734">
    <property type="term" value="P:auxin-activated signaling pathway"/>
    <property type="evidence" value="ECO:0007669"/>
    <property type="project" value="UniProtKB-KW"/>
</dbReference>
<dbReference type="GO" id="GO:0009733">
    <property type="term" value="P:response to auxin"/>
    <property type="evidence" value="ECO:0000304"/>
    <property type="project" value="TAIR"/>
</dbReference>
<dbReference type="FunFam" id="3.10.20.90:FF:000078">
    <property type="entry name" value="Auxin-responsive protein"/>
    <property type="match status" value="1"/>
</dbReference>
<dbReference type="Gene3D" id="3.10.20.90">
    <property type="entry name" value="Phosphatidylinositol 3-kinase Catalytic Subunit, Chain A, domain 1"/>
    <property type="match status" value="1"/>
</dbReference>
<dbReference type="InterPro" id="IPR033389">
    <property type="entry name" value="AUX/IAA_dom"/>
</dbReference>
<dbReference type="InterPro" id="IPR003311">
    <property type="entry name" value="AUX_IAA"/>
</dbReference>
<dbReference type="InterPro" id="IPR053793">
    <property type="entry name" value="PB1-like"/>
</dbReference>
<dbReference type="PANTHER" id="PTHR31734">
    <property type="entry name" value="AUXIN-RESPONSIVE PROTEIN IAA17"/>
    <property type="match status" value="1"/>
</dbReference>
<dbReference type="PANTHER" id="PTHR31734:SF157">
    <property type="entry name" value="AUXIN-RESPONSIVE PROTEIN IAA27"/>
    <property type="match status" value="1"/>
</dbReference>
<dbReference type="Pfam" id="PF02309">
    <property type="entry name" value="AUX_IAA"/>
    <property type="match status" value="1"/>
</dbReference>
<dbReference type="SUPFAM" id="SSF54277">
    <property type="entry name" value="CAD &amp; PB1 domains"/>
    <property type="match status" value="1"/>
</dbReference>
<dbReference type="PROSITE" id="PS51745">
    <property type="entry name" value="PB1"/>
    <property type="match status" value="1"/>
</dbReference>
<gene>
    <name type="primary">IAA27</name>
    <name type="synonym">PAP2</name>
    <name type="ordered locus">At4g29080</name>
    <name type="ORF">F19B15.110</name>
</gene>
<reference key="1">
    <citation type="submission" date="1998-08" db="EMBL/GenBank/DDBJ databases">
        <title>Identification and characterization of three phytochrome-associated proteins.</title>
        <authorList>
            <person name="Yi H."/>
            <person name="Lee J."/>
            <person name="Shin B."/>
            <person name="Song P.-S."/>
            <person name="Choi G."/>
        </authorList>
    </citation>
    <scope>NUCLEOTIDE SEQUENCE [MRNA]</scope>
</reference>
<reference key="2">
    <citation type="submission" date="2002-04" db="EMBL/GenBank/DDBJ databases">
        <title>Nucleotide sequence of the Arabidopsis IAA27.</title>
        <authorList>
            <person name="Sessa G."/>
            <person name="Carabelli M."/>
            <person name="Ciarbelli A.R."/>
            <person name="Ruzza V."/>
            <person name="Steindler C."/>
            <person name="Ruberti I."/>
        </authorList>
    </citation>
    <scope>NUCLEOTIDE SEQUENCE [MRNA]</scope>
    <source>
        <strain>cv. Columbia</strain>
    </source>
</reference>
<reference key="3">
    <citation type="journal article" date="1999" name="Nature">
        <title>Sequence and analysis of chromosome 4 of the plant Arabidopsis thaliana.</title>
        <authorList>
            <person name="Mayer K.F.X."/>
            <person name="Schueller C."/>
            <person name="Wambutt R."/>
            <person name="Murphy G."/>
            <person name="Volckaert G."/>
            <person name="Pohl T."/>
            <person name="Duesterhoeft A."/>
            <person name="Stiekema W."/>
            <person name="Entian K.-D."/>
            <person name="Terryn N."/>
            <person name="Harris B."/>
            <person name="Ansorge W."/>
            <person name="Brandt P."/>
            <person name="Grivell L.A."/>
            <person name="Rieger M."/>
            <person name="Weichselgartner M."/>
            <person name="de Simone V."/>
            <person name="Obermaier B."/>
            <person name="Mache R."/>
            <person name="Mueller M."/>
            <person name="Kreis M."/>
            <person name="Delseny M."/>
            <person name="Puigdomenech P."/>
            <person name="Watson M."/>
            <person name="Schmidtheini T."/>
            <person name="Reichert B."/>
            <person name="Portetelle D."/>
            <person name="Perez-Alonso M."/>
            <person name="Boutry M."/>
            <person name="Bancroft I."/>
            <person name="Vos P."/>
            <person name="Hoheisel J."/>
            <person name="Zimmermann W."/>
            <person name="Wedler H."/>
            <person name="Ridley P."/>
            <person name="Langham S.-A."/>
            <person name="McCullagh B."/>
            <person name="Bilham L."/>
            <person name="Robben J."/>
            <person name="van der Schueren J."/>
            <person name="Grymonprez B."/>
            <person name="Chuang Y.-J."/>
            <person name="Vandenbussche F."/>
            <person name="Braeken M."/>
            <person name="Weltjens I."/>
            <person name="Voet M."/>
            <person name="Bastiaens I."/>
            <person name="Aert R."/>
            <person name="Defoor E."/>
            <person name="Weitzenegger T."/>
            <person name="Bothe G."/>
            <person name="Ramsperger U."/>
            <person name="Hilbert H."/>
            <person name="Braun M."/>
            <person name="Holzer E."/>
            <person name="Brandt A."/>
            <person name="Peters S."/>
            <person name="van Staveren M."/>
            <person name="Dirkse W."/>
            <person name="Mooijman P."/>
            <person name="Klein Lankhorst R."/>
            <person name="Rose M."/>
            <person name="Hauf J."/>
            <person name="Koetter P."/>
            <person name="Berneiser S."/>
            <person name="Hempel S."/>
            <person name="Feldpausch M."/>
            <person name="Lamberth S."/>
            <person name="Van den Daele H."/>
            <person name="De Keyser A."/>
            <person name="Buysshaert C."/>
            <person name="Gielen J."/>
            <person name="Villarroel R."/>
            <person name="De Clercq R."/>
            <person name="van Montagu M."/>
            <person name="Rogers J."/>
            <person name="Cronin A."/>
            <person name="Quail M.A."/>
            <person name="Bray-Allen S."/>
            <person name="Clark L."/>
            <person name="Doggett J."/>
            <person name="Hall S."/>
            <person name="Kay M."/>
            <person name="Lennard N."/>
            <person name="McLay K."/>
            <person name="Mayes R."/>
            <person name="Pettett A."/>
            <person name="Rajandream M.A."/>
            <person name="Lyne M."/>
            <person name="Benes V."/>
            <person name="Rechmann S."/>
            <person name="Borkova D."/>
            <person name="Bloecker H."/>
            <person name="Scharfe M."/>
            <person name="Grimm M."/>
            <person name="Loehnert T.-H."/>
            <person name="Dose S."/>
            <person name="de Haan M."/>
            <person name="Maarse A.C."/>
            <person name="Schaefer M."/>
            <person name="Mueller-Auer S."/>
            <person name="Gabel C."/>
            <person name="Fuchs M."/>
            <person name="Fartmann B."/>
            <person name="Granderath K."/>
            <person name="Dauner D."/>
            <person name="Herzl A."/>
            <person name="Neumann S."/>
            <person name="Argiriou A."/>
            <person name="Vitale D."/>
            <person name="Liguori R."/>
            <person name="Piravandi E."/>
            <person name="Massenet O."/>
            <person name="Quigley F."/>
            <person name="Clabauld G."/>
            <person name="Muendlein A."/>
            <person name="Felber R."/>
            <person name="Schnabl S."/>
            <person name="Hiller R."/>
            <person name="Schmidt W."/>
            <person name="Lecharny A."/>
            <person name="Aubourg S."/>
            <person name="Chefdor F."/>
            <person name="Cooke R."/>
            <person name="Berger C."/>
            <person name="Monfort A."/>
            <person name="Casacuberta E."/>
            <person name="Gibbons T."/>
            <person name="Weber N."/>
            <person name="Vandenbol M."/>
            <person name="Bargues M."/>
            <person name="Terol J."/>
            <person name="Torres A."/>
            <person name="Perez-Perez A."/>
            <person name="Purnelle B."/>
            <person name="Bent E."/>
            <person name="Johnson S."/>
            <person name="Tacon D."/>
            <person name="Jesse T."/>
            <person name="Heijnen L."/>
            <person name="Schwarz S."/>
            <person name="Scholler P."/>
            <person name="Heber S."/>
            <person name="Francs P."/>
            <person name="Bielke C."/>
            <person name="Frishman D."/>
            <person name="Haase D."/>
            <person name="Lemcke K."/>
            <person name="Mewes H.-W."/>
            <person name="Stocker S."/>
            <person name="Zaccaria P."/>
            <person name="Bevan M."/>
            <person name="Wilson R.K."/>
            <person name="de la Bastide M."/>
            <person name="Habermann K."/>
            <person name="Parnell L."/>
            <person name="Dedhia N."/>
            <person name="Gnoj L."/>
            <person name="Schutz K."/>
            <person name="Huang E."/>
            <person name="Spiegel L."/>
            <person name="Sekhon M."/>
            <person name="Murray J."/>
            <person name="Sheet P."/>
            <person name="Cordes M."/>
            <person name="Abu-Threideh J."/>
            <person name="Stoneking T."/>
            <person name="Kalicki J."/>
            <person name="Graves T."/>
            <person name="Harmon G."/>
            <person name="Edwards J."/>
            <person name="Latreille P."/>
            <person name="Courtney L."/>
            <person name="Cloud J."/>
            <person name="Abbott A."/>
            <person name="Scott K."/>
            <person name="Johnson D."/>
            <person name="Minx P."/>
            <person name="Bentley D."/>
            <person name="Fulton B."/>
            <person name="Miller N."/>
            <person name="Greco T."/>
            <person name="Kemp K."/>
            <person name="Kramer J."/>
            <person name="Fulton L."/>
            <person name="Mardis E."/>
            <person name="Dante M."/>
            <person name="Pepin K."/>
            <person name="Hillier L.W."/>
            <person name="Nelson J."/>
            <person name="Spieth J."/>
            <person name="Ryan E."/>
            <person name="Andrews S."/>
            <person name="Geisel C."/>
            <person name="Layman D."/>
            <person name="Du H."/>
            <person name="Ali J."/>
            <person name="Berghoff A."/>
            <person name="Jones K."/>
            <person name="Drone K."/>
            <person name="Cotton M."/>
            <person name="Joshu C."/>
            <person name="Antonoiu B."/>
            <person name="Zidanic M."/>
            <person name="Strong C."/>
            <person name="Sun H."/>
            <person name="Lamar B."/>
            <person name="Yordan C."/>
            <person name="Ma P."/>
            <person name="Zhong J."/>
            <person name="Preston R."/>
            <person name="Vil D."/>
            <person name="Shekher M."/>
            <person name="Matero A."/>
            <person name="Shah R."/>
            <person name="Swaby I.K."/>
            <person name="O'Shaughnessy A."/>
            <person name="Rodriguez M."/>
            <person name="Hoffman J."/>
            <person name="Till S."/>
            <person name="Granat S."/>
            <person name="Shohdy N."/>
            <person name="Hasegawa A."/>
            <person name="Hameed A."/>
            <person name="Lodhi M."/>
            <person name="Johnson A."/>
            <person name="Chen E."/>
            <person name="Marra M.A."/>
            <person name="Martienssen R."/>
            <person name="McCombie W.R."/>
        </authorList>
    </citation>
    <scope>NUCLEOTIDE SEQUENCE [LARGE SCALE GENOMIC DNA]</scope>
    <source>
        <strain>cv. Columbia</strain>
    </source>
</reference>
<reference key="4">
    <citation type="journal article" date="2017" name="Plant J.">
        <title>Araport11: a complete reannotation of the Arabidopsis thaliana reference genome.</title>
        <authorList>
            <person name="Cheng C.Y."/>
            <person name="Krishnakumar V."/>
            <person name="Chan A.P."/>
            <person name="Thibaud-Nissen F."/>
            <person name="Schobel S."/>
            <person name="Town C.D."/>
        </authorList>
    </citation>
    <scope>GENOME REANNOTATION</scope>
    <source>
        <strain>cv. Columbia</strain>
    </source>
</reference>
<reference key="5">
    <citation type="journal article" date="2003" name="Science">
        <title>Empirical analysis of transcriptional activity in the Arabidopsis genome.</title>
        <authorList>
            <person name="Yamada K."/>
            <person name="Lim J."/>
            <person name="Dale J.M."/>
            <person name="Chen H."/>
            <person name="Shinn P."/>
            <person name="Palm C.J."/>
            <person name="Southwick A.M."/>
            <person name="Wu H.C."/>
            <person name="Kim C.J."/>
            <person name="Nguyen M."/>
            <person name="Pham P.K."/>
            <person name="Cheuk R.F."/>
            <person name="Karlin-Newmann G."/>
            <person name="Liu S.X."/>
            <person name="Lam B."/>
            <person name="Sakano H."/>
            <person name="Wu T."/>
            <person name="Yu G."/>
            <person name="Miranda M."/>
            <person name="Quach H.L."/>
            <person name="Tripp M."/>
            <person name="Chang C.H."/>
            <person name="Lee J.M."/>
            <person name="Toriumi M.J."/>
            <person name="Chan M.M."/>
            <person name="Tang C.C."/>
            <person name="Onodera C.S."/>
            <person name="Deng J.M."/>
            <person name="Akiyama K."/>
            <person name="Ansari Y."/>
            <person name="Arakawa T."/>
            <person name="Banh J."/>
            <person name="Banno F."/>
            <person name="Bowser L."/>
            <person name="Brooks S.Y."/>
            <person name="Carninci P."/>
            <person name="Chao Q."/>
            <person name="Choy N."/>
            <person name="Enju A."/>
            <person name="Goldsmith A.D."/>
            <person name="Gurjal M."/>
            <person name="Hansen N.F."/>
            <person name="Hayashizaki Y."/>
            <person name="Johnson-Hopson C."/>
            <person name="Hsuan V.W."/>
            <person name="Iida K."/>
            <person name="Karnes M."/>
            <person name="Khan S."/>
            <person name="Koesema E."/>
            <person name="Ishida J."/>
            <person name="Jiang P.X."/>
            <person name="Jones T."/>
            <person name="Kawai J."/>
            <person name="Kamiya A."/>
            <person name="Meyers C."/>
            <person name="Nakajima M."/>
            <person name="Narusaka M."/>
            <person name="Seki M."/>
            <person name="Sakurai T."/>
            <person name="Satou M."/>
            <person name="Tamse R."/>
            <person name="Vaysberg M."/>
            <person name="Wallender E.K."/>
            <person name="Wong C."/>
            <person name="Yamamura Y."/>
            <person name="Yuan S."/>
            <person name="Shinozaki K."/>
            <person name="Davis R.W."/>
            <person name="Theologis A."/>
            <person name="Ecker J.R."/>
        </authorList>
    </citation>
    <scope>NUCLEOTIDE SEQUENCE [LARGE SCALE MRNA]</scope>
    <source>
        <strain>cv. Columbia</strain>
    </source>
</reference>
<reference key="6">
    <citation type="journal article" date="2002" name="Plant Mol. Biol.">
        <title>Genetics of Aux/IAA and ARF action in plant growth and development.</title>
        <authorList>
            <person name="Liscum E."/>
            <person name="Reed J.W."/>
        </authorList>
    </citation>
    <scope>GENE FAMILY</scope>
    <scope>NOMENCLATURE</scope>
    <scope>FUNCTION</scope>
</reference>
<reference key="7">
    <citation type="journal article" date="2004" name="Plant Cell">
        <title>Aux/IAA proteins contain a potent transcriptional repression domain.</title>
        <authorList>
            <person name="Tiwari S.B."/>
            <person name="Hagen G."/>
            <person name="Guilfoyle T.J."/>
        </authorList>
    </citation>
    <scope>TRANSCRIPTIONAL REPRESSION DOMAIN</scope>
</reference>
<reference key="8">
    <citation type="journal article" date="2008" name="Science">
        <title>TOPLESS mediates auxin-dependent transcriptional repression during Arabidopsis embryogenesis.</title>
        <authorList>
            <person name="Szemenyei H."/>
            <person name="Hannon M."/>
            <person name="Long J.A."/>
        </authorList>
    </citation>
    <scope>INTERACTION WITH TPL</scope>
</reference>
<organism>
    <name type="scientific">Arabidopsis thaliana</name>
    <name type="common">Mouse-ear cress</name>
    <dbReference type="NCBI Taxonomy" id="3702"/>
    <lineage>
        <taxon>Eukaryota</taxon>
        <taxon>Viridiplantae</taxon>
        <taxon>Streptophyta</taxon>
        <taxon>Embryophyta</taxon>
        <taxon>Tracheophyta</taxon>
        <taxon>Spermatophyta</taxon>
        <taxon>Magnoliopsida</taxon>
        <taxon>eudicotyledons</taxon>
        <taxon>Gunneridae</taxon>
        <taxon>Pentapetalae</taxon>
        <taxon>rosids</taxon>
        <taxon>malvids</taxon>
        <taxon>Brassicales</taxon>
        <taxon>Brassicaceae</taxon>
        <taxon>Camelineae</taxon>
        <taxon>Arabidopsis</taxon>
    </lineage>
</organism>
<accession>Q9ZSY8</accession>